<dbReference type="EC" id="6.3.4.5" evidence="1"/>
<dbReference type="EMBL" id="AE017333">
    <property type="protein sequence ID" value="AAU41947.1"/>
    <property type="molecule type" value="Genomic_DNA"/>
</dbReference>
<dbReference type="EMBL" id="CP000002">
    <property type="protein sequence ID" value="AAU24589.1"/>
    <property type="molecule type" value="Genomic_DNA"/>
</dbReference>
<dbReference type="RefSeq" id="WP_003184365.1">
    <property type="nucleotide sequence ID" value="NC_006322.1"/>
</dbReference>
<dbReference type="SMR" id="Q65G67"/>
<dbReference type="STRING" id="279010.BL00417"/>
<dbReference type="KEGG" id="bld:BLi03084"/>
<dbReference type="KEGG" id="bli:BL00417"/>
<dbReference type="eggNOG" id="COG0137">
    <property type="taxonomic scope" value="Bacteria"/>
</dbReference>
<dbReference type="HOGENOM" id="CLU_032784_4_2_9"/>
<dbReference type="UniPathway" id="UPA00068">
    <property type="reaction ID" value="UER00113"/>
</dbReference>
<dbReference type="Proteomes" id="UP000000606">
    <property type="component" value="Chromosome"/>
</dbReference>
<dbReference type="GO" id="GO:0005737">
    <property type="term" value="C:cytoplasm"/>
    <property type="evidence" value="ECO:0007669"/>
    <property type="project" value="UniProtKB-SubCell"/>
</dbReference>
<dbReference type="GO" id="GO:0004055">
    <property type="term" value="F:argininosuccinate synthase activity"/>
    <property type="evidence" value="ECO:0007669"/>
    <property type="project" value="UniProtKB-UniRule"/>
</dbReference>
<dbReference type="GO" id="GO:0005524">
    <property type="term" value="F:ATP binding"/>
    <property type="evidence" value="ECO:0007669"/>
    <property type="project" value="UniProtKB-UniRule"/>
</dbReference>
<dbReference type="GO" id="GO:0000053">
    <property type="term" value="P:argininosuccinate metabolic process"/>
    <property type="evidence" value="ECO:0007669"/>
    <property type="project" value="TreeGrafter"/>
</dbReference>
<dbReference type="GO" id="GO:0006526">
    <property type="term" value="P:L-arginine biosynthetic process"/>
    <property type="evidence" value="ECO:0007669"/>
    <property type="project" value="UniProtKB-UniRule"/>
</dbReference>
<dbReference type="GO" id="GO:0000050">
    <property type="term" value="P:urea cycle"/>
    <property type="evidence" value="ECO:0007669"/>
    <property type="project" value="TreeGrafter"/>
</dbReference>
<dbReference type="CDD" id="cd01999">
    <property type="entry name" value="ASS"/>
    <property type="match status" value="1"/>
</dbReference>
<dbReference type="FunFam" id="1.20.5.470:FF:000002">
    <property type="entry name" value="Argininosuccinate synthase"/>
    <property type="match status" value="1"/>
</dbReference>
<dbReference type="FunFam" id="3.40.50.620:FF:000038">
    <property type="entry name" value="Argininosuccinate synthase"/>
    <property type="match status" value="1"/>
</dbReference>
<dbReference type="FunFam" id="3.90.1260.10:FF:000007">
    <property type="entry name" value="Argininosuccinate synthase"/>
    <property type="match status" value="1"/>
</dbReference>
<dbReference type="Gene3D" id="3.90.1260.10">
    <property type="entry name" value="Argininosuccinate synthetase, chain A, domain 2"/>
    <property type="match status" value="1"/>
</dbReference>
<dbReference type="Gene3D" id="3.40.50.620">
    <property type="entry name" value="HUPs"/>
    <property type="match status" value="1"/>
</dbReference>
<dbReference type="Gene3D" id="1.20.5.470">
    <property type="entry name" value="Single helix bin"/>
    <property type="match status" value="1"/>
</dbReference>
<dbReference type="HAMAP" id="MF_00005">
    <property type="entry name" value="Arg_succ_synth_type1"/>
    <property type="match status" value="1"/>
</dbReference>
<dbReference type="InterPro" id="IPR048268">
    <property type="entry name" value="Arginosuc_syn_C"/>
</dbReference>
<dbReference type="InterPro" id="IPR048267">
    <property type="entry name" value="Arginosuc_syn_N"/>
</dbReference>
<dbReference type="InterPro" id="IPR001518">
    <property type="entry name" value="Arginosuc_synth"/>
</dbReference>
<dbReference type="InterPro" id="IPR018223">
    <property type="entry name" value="Arginosuc_synth_CS"/>
</dbReference>
<dbReference type="InterPro" id="IPR023434">
    <property type="entry name" value="Arginosuc_synth_type_1_subfam"/>
</dbReference>
<dbReference type="InterPro" id="IPR024074">
    <property type="entry name" value="AS_cat/multimer_dom_body"/>
</dbReference>
<dbReference type="InterPro" id="IPR014729">
    <property type="entry name" value="Rossmann-like_a/b/a_fold"/>
</dbReference>
<dbReference type="NCBIfam" id="TIGR00032">
    <property type="entry name" value="argG"/>
    <property type="match status" value="1"/>
</dbReference>
<dbReference type="NCBIfam" id="NF001770">
    <property type="entry name" value="PRK00509.1"/>
    <property type="match status" value="1"/>
</dbReference>
<dbReference type="PANTHER" id="PTHR11587">
    <property type="entry name" value="ARGININOSUCCINATE SYNTHASE"/>
    <property type="match status" value="1"/>
</dbReference>
<dbReference type="PANTHER" id="PTHR11587:SF2">
    <property type="entry name" value="ARGININOSUCCINATE SYNTHASE"/>
    <property type="match status" value="1"/>
</dbReference>
<dbReference type="Pfam" id="PF20979">
    <property type="entry name" value="Arginosuc_syn_C"/>
    <property type="match status" value="1"/>
</dbReference>
<dbReference type="Pfam" id="PF00764">
    <property type="entry name" value="Arginosuc_synth"/>
    <property type="match status" value="1"/>
</dbReference>
<dbReference type="SUPFAM" id="SSF52402">
    <property type="entry name" value="Adenine nucleotide alpha hydrolases-like"/>
    <property type="match status" value="1"/>
</dbReference>
<dbReference type="SUPFAM" id="SSF69864">
    <property type="entry name" value="Argininosuccinate synthetase, C-terminal domain"/>
    <property type="match status" value="1"/>
</dbReference>
<dbReference type="PROSITE" id="PS00564">
    <property type="entry name" value="ARGININOSUCCIN_SYN_1"/>
    <property type="match status" value="1"/>
</dbReference>
<dbReference type="PROSITE" id="PS00565">
    <property type="entry name" value="ARGININOSUCCIN_SYN_2"/>
    <property type="match status" value="1"/>
</dbReference>
<comment type="catalytic activity">
    <reaction evidence="1">
        <text>L-citrulline + L-aspartate + ATP = 2-(N(omega)-L-arginino)succinate + AMP + diphosphate + H(+)</text>
        <dbReference type="Rhea" id="RHEA:10932"/>
        <dbReference type="ChEBI" id="CHEBI:15378"/>
        <dbReference type="ChEBI" id="CHEBI:29991"/>
        <dbReference type="ChEBI" id="CHEBI:30616"/>
        <dbReference type="ChEBI" id="CHEBI:33019"/>
        <dbReference type="ChEBI" id="CHEBI:57472"/>
        <dbReference type="ChEBI" id="CHEBI:57743"/>
        <dbReference type="ChEBI" id="CHEBI:456215"/>
        <dbReference type="EC" id="6.3.4.5"/>
    </reaction>
</comment>
<comment type="pathway">
    <text evidence="1">Amino-acid biosynthesis; L-arginine biosynthesis; L-arginine from L-ornithine and carbamoyl phosphate: step 2/3.</text>
</comment>
<comment type="subunit">
    <text evidence="1">Homotetramer.</text>
</comment>
<comment type="subcellular location">
    <subcellularLocation>
        <location evidence="1">Cytoplasm</location>
    </subcellularLocation>
</comment>
<comment type="similarity">
    <text evidence="1">Belongs to the argininosuccinate synthase family. Type 1 subfamily.</text>
</comment>
<keyword id="KW-0028">Amino-acid biosynthesis</keyword>
<keyword id="KW-0055">Arginine biosynthesis</keyword>
<keyword id="KW-0067">ATP-binding</keyword>
<keyword id="KW-0963">Cytoplasm</keyword>
<keyword id="KW-0436">Ligase</keyword>
<keyword id="KW-0547">Nucleotide-binding</keyword>
<keyword id="KW-1185">Reference proteome</keyword>
<reference key="1">
    <citation type="journal article" date="2004" name="J. Mol. Microbiol. Biotechnol.">
        <title>The complete genome sequence of Bacillus licheniformis DSM13, an organism with great industrial potential.</title>
        <authorList>
            <person name="Veith B."/>
            <person name="Herzberg C."/>
            <person name="Steckel S."/>
            <person name="Feesche J."/>
            <person name="Maurer K.H."/>
            <person name="Ehrenreich P."/>
            <person name="Baeumer S."/>
            <person name="Henne A."/>
            <person name="Liesegang H."/>
            <person name="Merkl R."/>
            <person name="Ehrenreich A."/>
            <person name="Gottschalk G."/>
        </authorList>
    </citation>
    <scope>NUCLEOTIDE SEQUENCE [LARGE SCALE GENOMIC DNA]</scope>
    <source>
        <strain>ATCC 14580 / DSM 13 / JCM 2505 / CCUG 7422 / NBRC 12200 / NCIMB 9375 / NCTC 10341 / NRRL NRS-1264 / Gibson 46</strain>
    </source>
</reference>
<reference key="2">
    <citation type="journal article" date="2004" name="Genome Biol.">
        <title>Complete genome sequence of the industrial bacterium Bacillus licheniformis and comparisons with closely related Bacillus species.</title>
        <authorList>
            <person name="Rey M.W."/>
            <person name="Ramaiya P."/>
            <person name="Nelson B.A."/>
            <person name="Brody-Karpin S.D."/>
            <person name="Zaretsky E.J."/>
            <person name="Tang M."/>
            <person name="Lopez de Leon A."/>
            <person name="Xiang H."/>
            <person name="Gusti V."/>
            <person name="Clausen I.G."/>
            <person name="Olsen P.B."/>
            <person name="Rasmussen M.D."/>
            <person name="Andersen J.T."/>
            <person name="Joergensen P.L."/>
            <person name="Larsen T.S."/>
            <person name="Sorokin A."/>
            <person name="Bolotin A."/>
            <person name="Lapidus A."/>
            <person name="Galleron N."/>
            <person name="Ehrlich S.D."/>
            <person name="Berka R.M."/>
        </authorList>
    </citation>
    <scope>NUCLEOTIDE SEQUENCE [LARGE SCALE GENOMIC DNA]</scope>
    <source>
        <strain>ATCC 14580 / DSM 13 / JCM 2505 / CCUG 7422 / NBRC 12200 / NCIMB 9375 / NCTC 10341 / NRRL NRS-1264 / Gibson 46</strain>
    </source>
</reference>
<feature type="chain" id="PRO_0000148570" description="Argininosuccinate synthase">
    <location>
        <begin position="1"/>
        <end position="403"/>
    </location>
</feature>
<feature type="binding site" evidence="1">
    <location>
        <begin position="10"/>
        <end position="18"/>
    </location>
    <ligand>
        <name>ATP</name>
        <dbReference type="ChEBI" id="CHEBI:30616"/>
    </ligand>
</feature>
<feature type="binding site" evidence="1">
    <location>
        <position position="87"/>
    </location>
    <ligand>
        <name>L-citrulline</name>
        <dbReference type="ChEBI" id="CHEBI:57743"/>
    </ligand>
</feature>
<feature type="binding site" evidence="1">
    <location>
        <position position="117"/>
    </location>
    <ligand>
        <name>ATP</name>
        <dbReference type="ChEBI" id="CHEBI:30616"/>
    </ligand>
</feature>
<feature type="binding site" evidence="1">
    <location>
        <position position="119"/>
    </location>
    <ligand>
        <name>L-aspartate</name>
        <dbReference type="ChEBI" id="CHEBI:29991"/>
    </ligand>
</feature>
<feature type="binding site" evidence="1">
    <location>
        <position position="123"/>
    </location>
    <ligand>
        <name>L-aspartate</name>
        <dbReference type="ChEBI" id="CHEBI:29991"/>
    </ligand>
</feature>
<feature type="binding site" evidence="1">
    <location>
        <position position="123"/>
    </location>
    <ligand>
        <name>L-citrulline</name>
        <dbReference type="ChEBI" id="CHEBI:57743"/>
    </ligand>
</feature>
<feature type="binding site" evidence="1">
    <location>
        <position position="124"/>
    </location>
    <ligand>
        <name>L-aspartate</name>
        <dbReference type="ChEBI" id="CHEBI:29991"/>
    </ligand>
</feature>
<feature type="binding site" evidence="1">
    <location>
        <position position="127"/>
    </location>
    <ligand>
        <name>L-citrulline</name>
        <dbReference type="ChEBI" id="CHEBI:57743"/>
    </ligand>
</feature>
<feature type="binding site" evidence="1">
    <location>
        <position position="175"/>
    </location>
    <ligand>
        <name>L-citrulline</name>
        <dbReference type="ChEBI" id="CHEBI:57743"/>
    </ligand>
</feature>
<feature type="binding site" evidence="1">
    <location>
        <position position="184"/>
    </location>
    <ligand>
        <name>L-citrulline</name>
        <dbReference type="ChEBI" id="CHEBI:57743"/>
    </ligand>
</feature>
<feature type="binding site" evidence="1">
    <location>
        <position position="260"/>
    </location>
    <ligand>
        <name>L-citrulline</name>
        <dbReference type="ChEBI" id="CHEBI:57743"/>
    </ligand>
</feature>
<feature type="binding site" evidence="1">
    <location>
        <position position="272"/>
    </location>
    <ligand>
        <name>L-citrulline</name>
        <dbReference type="ChEBI" id="CHEBI:57743"/>
    </ligand>
</feature>
<accession>Q65G67</accession>
<accession>Q62RM1</accession>
<gene>
    <name evidence="1" type="primary">argG</name>
    <name type="ordered locus">BLi03084</name>
    <name type="ordered locus">BL00417</name>
</gene>
<protein>
    <recommendedName>
        <fullName evidence="1">Argininosuccinate synthase</fullName>
        <ecNumber evidence="1">6.3.4.5</ecNumber>
    </recommendedName>
    <alternativeName>
        <fullName evidence="1">Citrulline--aspartate ligase</fullName>
    </alternativeName>
</protein>
<organism>
    <name type="scientific">Bacillus licheniformis (strain ATCC 14580 / DSM 13 / JCM 2505 / CCUG 7422 / NBRC 12200 / NCIMB 9375 / NCTC 10341 / NRRL NRS-1264 / Gibson 46)</name>
    <dbReference type="NCBI Taxonomy" id="279010"/>
    <lineage>
        <taxon>Bacteria</taxon>
        <taxon>Bacillati</taxon>
        <taxon>Bacillota</taxon>
        <taxon>Bacilli</taxon>
        <taxon>Bacillales</taxon>
        <taxon>Bacillaceae</taxon>
        <taxon>Bacillus</taxon>
    </lineage>
</organism>
<evidence type="ECO:0000255" key="1">
    <source>
        <dbReference type="HAMAP-Rule" id="MF_00005"/>
    </source>
</evidence>
<name>ASSY_BACLD</name>
<sequence>MTQKKKVVLAYSGGLDTSVAIKWLQEQGYDVVACCLDVGEGKDLAFVQQKALQVGASNSYVIDAKEEFAKEFALTALQAHTLYEGKYPLVSALSRPLIAKKLVEVAEKENAQAVAHGCTGKGNDQVRFEVSIKSLNPDLEVLAPVREWKWSRDEEIAYAEKHGIPIPINLDSPYSIDQNLWGRSNECGVLEDPWAAPPEGAYDLTKPLEKTPDTPDVIEIAFEEGVPVSIDGTHYPLSDLILKLNELAGAHGVGRIDHVENRLVGIKSREVYECPGAMTLIKAHKELEDLTLVKEVAHFKPIIEQKMAEVIYNGLWFSPLKDALSGFLKETQKHVTGVVRVKLFKGHAIVEGRKSEYSLYDEKLATYTKDDAFDHHAAVGFIELWGLPTKVNSIVQKKEQIKA</sequence>
<proteinExistence type="inferred from homology"/>